<accession>Q4KLF8</accession>
<reference key="1">
    <citation type="journal article" date="2004" name="Genome Res.">
        <title>The status, quality, and expansion of the NIH full-length cDNA project: the Mammalian Gene Collection (MGC).</title>
        <authorList>
            <consortium name="The MGC Project Team"/>
        </authorList>
    </citation>
    <scope>NUCLEOTIDE SEQUENCE [LARGE SCALE MRNA]</scope>
    <source>
        <tissue>Placenta</tissue>
    </source>
</reference>
<reference key="2">
    <citation type="submission" date="2007-04" db="UniProtKB">
        <authorList>
            <person name="Lubec G."/>
            <person name="Diao W."/>
            <person name="Chen W.-Q."/>
        </authorList>
    </citation>
    <scope>PROTEIN SEQUENCE OF 13-23; 48-60; 82-87; 101-108 AND 132-143</scope>
    <scope>IDENTIFICATION BY MASS SPECTROMETRY</scope>
    <source>
        <strain>Sprague-Dawley</strain>
        <tissue>Hippocampus</tissue>
    </source>
</reference>
<name>ARPC5_RAT</name>
<protein>
    <recommendedName>
        <fullName>Actin-related protein 2/3 complex subunit 5</fullName>
    </recommendedName>
    <alternativeName>
        <fullName>Arp2/3 complex 16 kDa subunit</fullName>
        <shortName>p16-ARC</shortName>
    </alternativeName>
</protein>
<sequence>MSKNTVSSARFRKVDVDEYDENKFVDEEDGGDGQAGPDEGEVDSCLRQGNMTAALQAALKNPPINTKSQAVKDRAGSIVLKVLISFKANDIEKAVQSLDKNGVDLLMKYIYKGFESPSDNSSAMLLQWHEKALAAGGVGSIVRVLTARKTV</sequence>
<proteinExistence type="evidence at protein level"/>
<dbReference type="EMBL" id="BC099238">
    <property type="protein sequence ID" value="AAH99238.1"/>
    <property type="molecule type" value="mRNA"/>
</dbReference>
<dbReference type="RefSeq" id="NP_001020888.1">
    <property type="nucleotide sequence ID" value="NM_001025717.1"/>
</dbReference>
<dbReference type="SMR" id="Q4KLF8"/>
<dbReference type="BioGRID" id="262257">
    <property type="interactions" value="2"/>
</dbReference>
<dbReference type="FunCoup" id="Q4KLF8">
    <property type="interactions" value="2450"/>
</dbReference>
<dbReference type="STRING" id="10116.ENSRNOP00000061516"/>
<dbReference type="iPTMnet" id="Q4KLF8"/>
<dbReference type="PhosphoSitePlus" id="Q4KLF8"/>
<dbReference type="SwissPalm" id="Q4KLF8"/>
<dbReference type="jPOST" id="Q4KLF8"/>
<dbReference type="PaxDb" id="10116-ENSRNOP00000061516"/>
<dbReference type="GeneID" id="360854"/>
<dbReference type="KEGG" id="rno:360854"/>
<dbReference type="UCSC" id="RGD:1311791">
    <property type="organism name" value="rat"/>
</dbReference>
<dbReference type="AGR" id="RGD:1311791"/>
<dbReference type="CTD" id="10092"/>
<dbReference type="RGD" id="1311791">
    <property type="gene designation" value="Arpc5"/>
</dbReference>
<dbReference type="VEuPathDB" id="HostDB:ENSRNOG00000028062"/>
<dbReference type="eggNOG" id="KOG3380">
    <property type="taxonomic scope" value="Eukaryota"/>
</dbReference>
<dbReference type="HOGENOM" id="CLU_101888_1_1_1"/>
<dbReference type="InParanoid" id="Q4KLF8"/>
<dbReference type="OrthoDB" id="429520at2759"/>
<dbReference type="PhylomeDB" id="Q4KLF8"/>
<dbReference type="TreeFam" id="TF319716"/>
<dbReference type="Reactome" id="R-RNO-2029482">
    <property type="pathway name" value="Regulation of actin dynamics for phagocytic cup formation"/>
</dbReference>
<dbReference type="Reactome" id="R-RNO-3928662">
    <property type="pathway name" value="EPHB-mediated forward signaling"/>
</dbReference>
<dbReference type="Reactome" id="R-RNO-5663213">
    <property type="pathway name" value="RHO GTPases Activate WASPs and WAVEs"/>
</dbReference>
<dbReference type="Reactome" id="R-RNO-6798695">
    <property type="pathway name" value="Neutrophil degranulation"/>
</dbReference>
<dbReference type="Reactome" id="R-RNO-8856828">
    <property type="pathway name" value="Clathrin-mediated endocytosis"/>
</dbReference>
<dbReference type="PRO" id="PR:Q4KLF8"/>
<dbReference type="Proteomes" id="UP000002494">
    <property type="component" value="Chromosome 13"/>
</dbReference>
<dbReference type="Bgee" id="ENSRNOG00000028062">
    <property type="expression patterns" value="Expressed in Ammon's horn and 20 other cell types or tissues"/>
</dbReference>
<dbReference type="ExpressionAtlas" id="Q4KLF8">
    <property type="expression patterns" value="baseline and differential"/>
</dbReference>
<dbReference type="GO" id="GO:0005885">
    <property type="term" value="C:Arp2/3 protein complex"/>
    <property type="evidence" value="ECO:0000250"/>
    <property type="project" value="UniProtKB"/>
</dbReference>
<dbReference type="GO" id="GO:0005737">
    <property type="term" value="C:cytoplasm"/>
    <property type="evidence" value="ECO:0000318"/>
    <property type="project" value="GO_Central"/>
</dbReference>
<dbReference type="GO" id="GO:0005768">
    <property type="term" value="C:endosome"/>
    <property type="evidence" value="ECO:0000314"/>
    <property type="project" value="RGD"/>
</dbReference>
<dbReference type="GO" id="GO:0098978">
    <property type="term" value="C:glutamatergic synapse"/>
    <property type="evidence" value="ECO:0000314"/>
    <property type="project" value="SynGO"/>
</dbReference>
<dbReference type="GO" id="GO:0030426">
    <property type="term" value="C:growth cone"/>
    <property type="evidence" value="ECO:0000314"/>
    <property type="project" value="RGD"/>
</dbReference>
<dbReference type="GO" id="GO:0030027">
    <property type="term" value="C:lamellipodium"/>
    <property type="evidence" value="ECO:0000266"/>
    <property type="project" value="RGD"/>
</dbReference>
<dbReference type="GO" id="GO:0005634">
    <property type="term" value="C:nucleus"/>
    <property type="evidence" value="ECO:0000250"/>
    <property type="project" value="UniProtKB"/>
</dbReference>
<dbReference type="GO" id="GO:0014069">
    <property type="term" value="C:postsynaptic density"/>
    <property type="evidence" value="ECO:0000314"/>
    <property type="project" value="SynGO"/>
</dbReference>
<dbReference type="GO" id="GO:0035861">
    <property type="term" value="C:site of double-strand break"/>
    <property type="evidence" value="ECO:0000250"/>
    <property type="project" value="UniProtKB"/>
</dbReference>
<dbReference type="GO" id="GO:0051015">
    <property type="term" value="F:actin filament binding"/>
    <property type="evidence" value="ECO:0000318"/>
    <property type="project" value="GO_Central"/>
</dbReference>
<dbReference type="GO" id="GO:0005200">
    <property type="term" value="F:structural constituent of cytoskeleton"/>
    <property type="evidence" value="ECO:0000266"/>
    <property type="project" value="RGD"/>
</dbReference>
<dbReference type="GO" id="GO:0051639">
    <property type="term" value="P:actin filament network formation"/>
    <property type="evidence" value="ECO:0000315"/>
    <property type="project" value="RGD"/>
</dbReference>
<dbReference type="GO" id="GO:0034314">
    <property type="term" value="P:Arp2/3 complex-mediated actin nucleation"/>
    <property type="evidence" value="ECO:0000266"/>
    <property type="project" value="RGD"/>
</dbReference>
<dbReference type="GO" id="GO:0016477">
    <property type="term" value="P:cell migration"/>
    <property type="evidence" value="ECO:0000266"/>
    <property type="project" value="RGD"/>
</dbReference>
<dbReference type="GO" id="GO:0097581">
    <property type="term" value="P:lamellipodium organization"/>
    <property type="evidence" value="ECO:0000315"/>
    <property type="project" value="RGD"/>
</dbReference>
<dbReference type="GO" id="GO:0030011">
    <property type="term" value="P:maintenance of cell polarity"/>
    <property type="evidence" value="ECO:0000315"/>
    <property type="project" value="RGD"/>
</dbReference>
<dbReference type="GO" id="GO:0061842">
    <property type="term" value="P:microtubule organizing center localization"/>
    <property type="evidence" value="ECO:0000315"/>
    <property type="project" value="RGD"/>
</dbReference>
<dbReference type="GO" id="GO:0021769">
    <property type="term" value="P:orbitofrontal cortex development"/>
    <property type="evidence" value="ECO:0000270"/>
    <property type="project" value="RGD"/>
</dbReference>
<dbReference type="GO" id="GO:0030833">
    <property type="term" value="P:regulation of actin filament polymerization"/>
    <property type="evidence" value="ECO:0007669"/>
    <property type="project" value="InterPro"/>
</dbReference>
<dbReference type="GO" id="GO:0014909">
    <property type="term" value="P:smooth muscle cell migration"/>
    <property type="evidence" value="ECO:0000315"/>
    <property type="project" value="RGD"/>
</dbReference>
<dbReference type="FunFam" id="1.25.40.190:FF:000001">
    <property type="entry name" value="Actin-related protein 2/3 complex subunit 5"/>
    <property type="match status" value="1"/>
</dbReference>
<dbReference type="Gene3D" id="1.25.40.190">
    <property type="entry name" value="Actin-related protein 2/3 complex subunit 5"/>
    <property type="match status" value="1"/>
</dbReference>
<dbReference type="InterPro" id="IPR006789">
    <property type="entry name" value="ARPC5"/>
</dbReference>
<dbReference type="InterPro" id="IPR036743">
    <property type="entry name" value="ARPC5_sf"/>
</dbReference>
<dbReference type="PANTHER" id="PTHR12644">
    <property type="entry name" value="ARP2/3 COMPLEX 16 KD SUBUNIT P16-ARC"/>
    <property type="match status" value="1"/>
</dbReference>
<dbReference type="Pfam" id="PF04699">
    <property type="entry name" value="P16-Arc"/>
    <property type="match status" value="1"/>
</dbReference>
<dbReference type="PIRSF" id="PIRSF039096">
    <property type="entry name" value="p16-ARC"/>
    <property type="match status" value="1"/>
</dbReference>
<dbReference type="SUPFAM" id="SSF69103">
    <property type="entry name" value="Arp2/3 complex 16 kDa subunit ARPC5"/>
    <property type="match status" value="1"/>
</dbReference>
<feature type="initiator methionine" description="Removed" evidence="1">
    <location>
        <position position="1"/>
    </location>
</feature>
<feature type="chain" id="PRO_0000269564" description="Actin-related protein 2/3 complex subunit 5">
    <location>
        <begin position="2"/>
        <end position="151"/>
    </location>
</feature>
<feature type="region of interest" description="Disordered" evidence="2">
    <location>
        <begin position="21"/>
        <end position="44"/>
    </location>
</feature>
<feature type="modified residue" description="N-acetylserine" evidence="1">
    <location>
        <position position="2"/>
    </location>
</feature>
<feature type="sequence conflict" description="In Ref. 2; AA sequence." evidence="3" ref="2">
    <original>V</original>
    <variation>I</variation>
    <location>
        <position position="103"/>
    </location>
</feature>
<keyword id="KW-0007">Acetylation</keyword>
<keyword id="KW-0009">Actin-binding</keyword>
<keyword id="KW-0966">Cell projection</keyword>
<keyword id="KW-0963">Cytoplasm</keyword>
<keyword id="KW-0206">Cytoskeleton</keyword>
<keyword id="KW-0903">Direct protein sequencing</keyword>
<keyword id="KW-0539">Nucleus</keyword>
<keyword id="KW-1185">Reference proteome</keyword>
<keyword id="KW-0832">Ubl conjugation</keyword>
<gene>
    <name type="primary">Arpc5</name>
</gene>
<evidence type="ECO:0000250" key="1">
    <source>
        <dbReference type="UniProtKB" id="O15511"/>
    </source>
</evidence>
<evidence type="ECO:0000256" key="2">
    <source>
        <dbReference type="SAM" id="MobiDB-lite"/>
    </source>
</evidence>
<evidence type="ECO:0000305" key="3"/>
<comment type="function">
    <text evidence="1">Component of the Arp2/3 complex, a multiprotein complex that mediates actin polymerization upon stimulation by nucleation-promoting factor (NPF). The Arp2/3 complex mediates the formation of branched actin networks in the cytoplasm, providing the force for cell motility. In addition to its role in the cytoplasmic cytoskeleton, the Arp2/3 complex also promotes actin polymerization in the nucleus, thereby regulating gene transcription and repair of damaged DNA. The Arp2/3 complex promotes homologous recombination (HR) repair in response to DNA damage by promoting nuclear actin polymerization, leading to drive motility of double-strand breaks (DSBs).</text>
</comment>
<comment type="subunit">
    <text evidence="1">Component of the Arp2/3 complex composed of ACTR2/ARP2, ACTR3/ARP3, ARPC1B/p41-ARC, ARPC2/p34-ARC, ARPC3/p21-ARC, ARPC4/p20-ARC and ARPC5/p16-ARC.</text>
</comment>
<comment type="subcellular location">
    <subcellularLocation>
        <location evidence="1">Cytoplasm</location>
        <location evidence="1">Cytoskeleton</location>
    </subcellularLocation>
    <subcellularLocation>
        <location evidence="1">Cell projection</location>
    </subcellularLocation>
    <subcellularLocation>
        <location evidence="1">Nucleus</location>
    </subcellularLocation>
</comment>
<comment type="PTM">
    <text evidence="1">Polyubiquitinated by RNF128 with 'Lys-63'-linked chains, leading to proteasomal degradation.</text>
</comment>
<comment type="similarity">
    <text evidence="3">Belongs to the ARPC5 family.</text>
</comment>
<organism>
    <name type="scientific">Rattus norvegicus</name>
    <name type="common">Rat</name>
    <dbReference type="NCBI Taxonomy" id="10116"/>
    <lineage>
        <taxon>Eukaryota</taxon>
        <taxon>Metazoa</taxon>
        <taxon>Chordata</taxon>
        <taxon>Craniata</taxon>
        <taxon>Vertebrata</taxon>
        <taxon>Euteleostomi</taxon>
        <taxon>Mammalia</taxon>
        <taxon>Eutheria</taxon>
        <taxon>Euarchontoglires</taxon>
        <taxon>Glires</taxon>
        <taxon>Rodentia</taxon>
        <taxon>Myomorpha</taxon>
        <taxon>Muroidea</taxon>
        <taxon>Muridae</taxon>
        <taxon>Murinae</taxon>
        <taxon>Rattus</taxon>
    </lineage>
</organism>